<protein>
    <recommendedName>
        <fullName evidence="3">Conotoxin vc5a</fullName>
    </recommendedName>
    <alternativeName>
        <fullName evidence="3">Vc5.1</fullName>
    </alternativeName>
</protein>
<sequence length="54" mass="5952">VILLLITSTPSVDARLKAKDNMPLASFHDNAKRTLQTRLINTRCCPGKPCCRIG</sequence>
<evidence type="ECO:0000255" key="1"/>
<evidence type="ECO:0000269" key="2">
    <source>
    </source>
</evidence>
<evidence type="ECO:0000303" key="3">
    <source>
    </source>
</evidence>
<evidence type="ECO:0000305" key="4"/>
<evidence type="ECO:0000305" key="5">
    <source>
    </source>
</evidence>
<evidence type="ECO:0000305" key="6">
    <source>
    </source>
</evidence>
<comment type="subcellular location">
    <subcellularLocation>
        <location evidence="2">Secreted</location>
    </subcellularLocation>
</comment>
<comment type="tissue specificity">
    <text evidence="5">Expressed by the venom duct.</text>
</comment>
<comment type="domain">
    <text evidence="4">The cysteine framework is V (CC-CC).</text>
</comment>
<comment type="PTM">
    <text evidence="4">Contains 2 disulfide bonds that can be either 'C1-C3, C2-C4' or 'C1-C4, C2-C3', since these disulfide connectivities have been observed for conotoxins with cysteine framework V (for examples, see AC P0DQQ7 and AC P81755).</text>
</comment>
<comment type="mass spectrometry" mass="1090.5" method="Electrospray" evidence="2"/>
<comment type="miscellaneous">
    <text evidence="6">Negative results: does not have the ability to interact with the G-protein coupled somatostatin type 3 receptor (SSTR3).</text>
</comment>
<comment type="similarity">
    <text evidence="4">Belongs to the conotoxin T superfamily.</text>
</comment>
<feature type="signal peptide" evidence="1">
    <location>
        <begin position="1" status="less than"/>
        <end position="14"/>
    </location>
</feature>
<feature type="propeptide" id="PRO_0000035043" evidence="5">
    <location>
        <begin position="15"/>
        <end position="42"/>
    </location>
</feature>
<feature type="peptide" id="PRO_0000035044" description="Conotoxin vc5a" evidence="2">
    <location>
        <begin position="44"/>
        <end position="53"/>
    </location>
</feature>
<feature type="modified residue" description="4-hydroxyproline" evidence="2">
    <location>
        <position position="49"/>
    </location>
</feature>
<feature type="modified residue" description="Isoleucine amide" evidence="2">
    <location>
        <position position="53"/>
    </location>
</feature>
<feature type="non-terminal residue">
    <location>
        <position position="1"/>
    </location>
</feature>
<organism>
    <name type="scientific">Conus victoriae</name>
    <name type="common">Queen Victoria cone</name>
    <dbReference type="NCBI Taxonomy" id="319920"/>
    <lineage>
        <taxon>Eukaryota</taxon>
        <taxon>Metazoa</taxon>
        <taxon>Spiralia</taxon>
        <taxon>Lophotrochozoa</taxon>
        <taxon>Mollusca</taxon>
        <taxon>Gastropoda</taxon>
        <taxon>Caenogastropoda</taxon>
        <taxon>Neogastropoda</taxon>
        <taxon>Conoidea</taxon>
        <taxon>Conidae</taxon>
        <taxon>Conus</taxon>
        <taxon>Cylinder</taxon>
    </lineage>
</organism>
<proteinExistence type="evidence at protein level"/>
<name>CT5A_CONVC</name>
<accession>P69765</accession>
<reference key="1">
    <citation type="journal article" date="2004" name="J. Mass Spectrom.">
        <title>Determining sequences and post-translational modifications of novel conotoxins in Conus victoriae using cDNA sequencing and mass spectrometry.</title>
        <authorList>
            <person name="Jakubowski J.A."/>
            <person name="Keays D.A."/>
            <person name="Kelley W.P."/>
            <person name="Sandall D.W."/>
            <person name="Bingham J.-P."/>
            <person name="Livett B.G."/>
            <person name="Gayler K.R."/>
            <person name="Sweedler J.V."/>
        </authorList>
    </citation>
    <scope>NUCLEOTIDE SEQUENCE [MRNA]</scope>
    <scope>HYDROXYLATION AT PRO-49</scope>
    <scope>AMIDATION AT ILE-53</scope>
    <scope>MASS SPECTROMETRY</scope>
    <scope>SUBCELLULAR LOCATION</scope>
    <source>
        <tissue>Venom</tissue>
        <tissue>Venom duct</tissue>
    </source>
</reference>
<reference key="2">
    <citation type="journal article" date="2013" name="Biochem. Pharmacol.">
        <title>Identification, structural and pharmacological characterization of tau-CnVA, a conopeptide that selectively interacts with somatostatin sst receptor.</title>
        <authorList>
            <person name="Petrel C."/>
            <person name="Hocking H.G."/>
            <person name="Reynaud M."/>
            <person name="Upert G."/>
            <person name="Favreau P."/>
            <person name="Biass D."/>
            <person name="Paolini-Bertrand M."/>
            <person name="Peigneur S."/>
            <person name="Tytgat J."/>
            <person name="Gilles N."/>
            <person name="Hartley O."/>
            <person name="Boelens R."/>
            <person name="Stocklin R."/>
            <person name="Servent D."/>
        </authorList>
    </citation>
    <scope>SYNTHESIS OF 44-53</scope>
</reference>
<dbReference type="ConoServer" id="1549">
    <property type="toxin name" value="VcVA precursor"/>
</dbReference>
<dbReference type="GO" id="GO:0005576">
    <property type="term" value="C:extracellular region"/>
    <property type="evidence" value="ECO:0007669"/>
    <property type="project" value="UniProtKB-SubCell"/>
</dbReference>
<dbReference type="GO" id="GO:0099106">
    <property type="term" value="F:ion channel regulator activity"/>
    <property type="evidence" value="ECO:0007669"/>
    <property type="project" value="UniProtKB-KW"/>
</dbReference>
<dbReference type="GO" id="GO:0090729">
    <property type="term" value="F:toxin activity"/>
    <property type="evidence" value="ECO:0007669"/>
    <property type="project" value="UniProtKB-KW"/>
</dbReference>
<dbReference type="InterPro" id="IPR031565">
    <property type="entry name" value="T-conotoxin"/>
</dbReference>
<dbReference type="Pfam" id="PF16981">
    <property type="entry name" value="Chi-conotoxin"/>
    <property type="match status" value="1"/>
</dbReference>
<keyword id="KW-0027">Amidation</keyword>
<keyword id="KW-1015">Disulfide bond</keyword>
<keyword id="KW-0379">Hydroxylation</keyword>
<keyword id="KW-0872">Ion channel impairing toxin</keyword>
<keyword id="KW-0528">Neurotoxin</keyword>
<keyword id="KW-0964">Secreted</keyword>
<keyword id="KW-0732">Signal</keyword>
<keyword id="KW-0800">Toxin</keyword>